<comment type="function">
    <text>Type V collagen is a member of group I collagen (fibrillar forming collagen). It is a minor connective tissue component of nearly ubiquitous distribution. Type V collagen binds to DNA, heparan sulfate, thrombospondin, heparin, and insulin.</text>
</comment>
<comment type="subunit">
    <text evidence="16">Trimers of two alpha 1(V) and one alpha 2(V) chains in most tissues and trimers of one alpha 1(V), one alpha 2(V), and one alpha 3(V) chains in placenta. Interacts with CSPG4.</text>
</comment>
<comment type="interaction">
    <interactant intactId="EBI-2464511">
        <id>P20908</id>
    </interactant>
    <interactant intactId="EBI-489827">
        <id>P13497</id>
        <label>BMP1</label>
    </interactant>
    <organismsDiffer>false</organismsDiffer>
    <experiments>2</experiments>
</comment>
<comment type="interaction">
    <interactant intactId="EBI-2464511">
        <id>P20908</id>
    </interactant>
    <interactant intactId="EBI-22099195">
        <id>P02751-1</id>
        <label>FN1</label>
    </interactant>
    <organismsDiffer>false</organismsDiffer>
    <experiments>2</experiments>
</comment>
<comment type="interaction">
    <interactant intactId="EBI-2464511">
        <id>P20908</id>
    </interactant>
    <interactant intactId="EBI-1033518">
        <id>P08253</id>
        <label>MMP2</label>
    </interactant>
    <organismsDiffer>false</organismsDiffer>
    <experiments>4</experiments>
</comment>
<comment type="interaction">
    <interactant intactId="EBI-2464511">
        <id>P20908</id>
    </interactant>
    <interactant intactId="EBI-8869614">
        <id>Q15113</id>
        <label>PCOLCE</label>
    </interactant>
    <organismsDiffer>false</organismsDiffer>
    <experiments>2</experiments>
</comment>
<comment type="interaction">
    <interactant intactId="EBI-2464511">
        <id>P20908</id>
    </interactant>
    <interactant intactId="EBI-984930">
        <id>P17706</id>
        <label>PTPN2</label>
    </interactant>
    <organismsDiffer>false</organismsDiffer>
    <experiments>2</experiments>
</comment>
<comment type="interaction">
    <interactant intactId="EBI-2464511">
        <id>P20908</id>
    </interactant>
    <interactant intactId="EBI-712536">
        <id>P01033</id>
        <label>TIMP1</label>
    </interactant>
    <organismsDiffer>false</organismsDiffer>
    <experiments>2</experiments>
</comment>
<comment type="interaction">
    <interactant intactId="EBI-2464511">
        <id>P20908</id>
    </interactant>
    <interactant intactId="EBI-9979894">
        <id>P24821</id>
        <label>TNC</label>
    </interactant>
    <organismsDiffer>false</organismsDiffer>
    <experiments>2</experiments>
</comment>
<comment type="subcellular location">
    <subcellularLocation>
        <location evidence="3">Secreted</location>
        <location evidence="3">Extracellular space</location>
        <location evidence="3">Extracellular matrix</location>
    </subcellularLocation>
</comment>
<comment type="alternative products">
    <event type="alternative splicing"/>
    <isoform>
        <id>P20908-1</id>
        <name>1</name>
        <name evidence="17">A</name>
        <sequence type="displayed"/>
    </isoform>
    <isoform>
        <id>P20908-2</id>
        <name>2</name>
        <name evidence="17">B</name>
        <sequence type="described" ref="VSP_059655"/>
    </isoform>
</comment>
<comment type="domain">
    <text evidence="1">The C-terminal propeptide, also known as COLFI domain, have crucial roles in tissue growth and repair by controlling both the intracellular assembly of procollagen molecules and the extracellular assembly of collagen fibrils. It binds a calcium ion which is essential for its function (By similarity).</text>
</comment>
<comment type="PTM">
    <text evidence="11">Prolines at the third position of the tripeptide repeating unit (G-X-Y) are hydroxylated in some or all of the chains.</text>
</comment>
<comment type="PTM">
    <text>Sulfated on 40% of tyrosines.</text>
</comment>
<comment type="disease" evidence="6 7 8 9 15">
    <disease id="DI-00436">
        <name>Ehlers-Danlos syndrome, classic type, 1</name>
        <acronym>EDSCL1</acronym>
        <description>A form of Ehlers-Danlos syndrome, a group of connective tissue disorders characterized by skin hyperextensibility, articular hypermobility, and tissue fragility. The main features of classic Ehlers-Danlos syndrome are joint hypermobility and dislocation, and fragile, bruisable skin. EDSCL1 inheritance is autosomal dominant.</description>
        <dbReference type="MIM" id="130000"/>
    </disease>
    <text>The disease is caused by variants affecting the gene represented in this entry.</text>
</comment>
<comment type="disease" evidence="13">
    <disease id="DI-06112">
        <name>Fibromuscular dysplasia, multifocal</name>
        <acronym>FMDMF</acronym>
        <description>An autosomal dominant vascular disorder with incomplete penetrance, characterized by fibrous tissue and webs developing in the artery wall and leading to multiple arterial stenoses. Patients with multifocal fibromuscular dysplasia can develop arterial tortuosity, macroaneurysms, and dissections. Arterial rupture may occur.</description>
        <dbReference type="MIM" id="619329"/>
    </disease>
    <text>The disease is caused by variants affecting the gene represented in this entry.</text>
</comment>
<comment type="similarity">
    <text evidence="3">Belongs to the fibrillar collagen family.</text>
</comment>
<gene>
    <name type="primary">COL5A1</name>
</gene>
<evidence type="ECO:0000250" key="1"/>
<evidence type="ECO:0000255" key="2"/>
<evidence type="ECO:0000255" key="3">
    <source>
        <dbReference type="PROSITE-ProRule" id="PRU00793"/>
    </source>
</evidence>
<evidence type="ECO:0000256" key="4">
    <source>
        <dbReference type="SAM" id="MobiDB-lite"/>
    </source>
</evidence>
<evidence type="ECO:0000269" key="5">
    <source>
    </source>
</evidence>
<evidence type="ECO:0000269" key="6">
    <source>
    </source>
</evidence>
<evidence type="ECO:0000269" key="7">
    <source>
    </source>
</evidence>
<evidence type="ECO:0000269" key="8">
    <source>
    </source>
</evidence>
<evidence type="ECO:0000269" key="9">
    <source>
    </source>
</evidence>
<evidence type="ECO:0000269" key="10">
    <source>
    </source>
</evidence>
<evidence type="ECO:0000269" key="11">
    <source>
    </source>
</evidence>
<evidence type="ECO:0000269" key="12">
    <source>
    </source>
</evidence>
<evidence type="ECO:0000269" key="13">
    <source>
    </source>
</evidence>
<evidence type="ECO:0000269" key="14">
    <source>
    </source>
</evidence>
<evidence type="ECO:0000269" key="15">
    <source>
    </source>
</evidence>
<evidence type="ECO:0000269" key="16">
    <source>
    </source>
</evidence>
<evidence type="ECO:0000303" key="17">
    <source>
    </source>
</evidence>
<evidence type="ECO:0000305" key="18"/>
<feature type="signal peptide" evidence="2">
    <location>
        <begin position="1"/>
        <end position="37"/>
    </location>
</feature>
<feature type="chain" id="PRO_0000005756" description="Collagen alpha-1(V) chain">
    <location>
        <begin position="38"/>
        <end position="1605"/>
    </location>
</feature>
<feature type="propeptide" id="PRO_0000005757" description="C-terminal propeptide">
    <location>
        <begin position="1606"/>
        <end position="1838"/>
    </location>
</feature>
<feature type="domain" description="Laminin G-like">
    <location>
        <begin position="72"/>
        <end position="244"/>
    </location>
</feature>
<feature type="domain" description="Fibrillar collagen NC1" evidence="3">
    <location>
        <begin position="1609"/>
        <end position="1837"/>
    </location>
</feature>
<feature type="region of interest" description="Nonhelical region">
    <location>
        <begin position="231"/>
        <end position="443"/>
    </location>
</feature>
<feature type="region of interest" description="Disordered" evidence="4">
    <location>
        <begin position="242"/>
        <end position="269"/>
    </location>
</feature>
<feature type="region of interest" description="Disordered" evidence="4">
    <location>
        <begin position="281"/>
        <end position="457"/>
    </location>
</feature>
<feature type="region of interest" description="Interrupted collagenous region">
    <location>
        <begin position="444"/>
        <end position="558"/>
    </location>
</feature>
<feature type="region of interest" description="Disordered" evidence="4">
    <location>
        <begin position="470"/>
        <end position="520"/>
    </location>
</feature>
<feature type="region of interest" description="Disordered" evidence="4">
    <location>
        <begin position="526"/>
        <end position="545"/>
    </location>
</feature>
<feature type="region of interest" description="Disordered" evidence="4">
    <location>
        <begin position="559"/>
        <end position="1574"/>
    </location>
</feature>
<feature type="region of interest" description="Triple-helical region">
    <location>
        <begin position="559"/>
        <end position="1570"/>
    </location>
</feature>
<feature type="region of interest" description="Nonhelical region">
    <location>
        <begin position="1571"/>
        <end position="1605"/>
    </location>
</feature>
<feature type="compositionally biased region" description="Acidic residues" evidence="4">
    <location>
        <begin position="258"/>
        <end position="269"/>
    </location>
</feature>
<feature type="compositionally biased region" description="Basic and acidic residues" evidence="4">
    <location>
        <begin position="285"/>
        <end position="304"/>
    </location>
</feature>
<feature type="compositionally biased region" description="Low complexity" evidence="4">
    <location>
        <begin position="309"/>
        <end position="323"/>
    </location>
</feature>
<feature type="compositionally biased region" description="Polar residues" evidence="4">
    <location>
        <begin position="377"/>
        <end position="388"/>
    </location>
</feature>
<feature type="compositionally biased region" description="Acidic residues" evidence="4">
    <location>
        <begin position="396"/>
        <end position="406"/>
    </location>
</feature>
<feature type="compositionally biased region" description="Low complexity" evidence="4">
    <location>
        <begin position="417"/>
        <end position="428"/>
    </location>
</feature>
<feature type="compositionally biased region" description="Pro residues" evidence="4">
    <location>
        <begin position="470"/>
        <end position="485"/>
    </location>
</feature>
<feature type="compositionally biased region" description="Low complexity" evidence="4">
    <location>
        <begin position="506"/>
        <end position="520"/>
    </location>
</feature>
<feature type="compositionally biased region" description="Low complexity" evidence="4">
    <location>
        <begin position="587"/>
        <end position="597"/>
    </location>
</feature>
<feature type="compositionally biased region" description="Low complexity" evidence="4">
    <location>
        <begin position="671"/>
        <end position="686"/>
    </location>
</feature>
<feature type="compositionally biased region" description="Pro residues" evidence="4">
    <location>
        <begin position="687"/>
        <end position="696"/>
    </location>
</feature>
<feature type="compositionally biased region" description="Low complexity" evidence="4">
    <location>
        <begin position="722"/>
        <end position="741"/>
    </location>
</feature>
<feature type="compositionally biased region" description="Low complexity" evidence="4">
    <location>
        <begin position="747"/>
        <end position="756"/>
    </location>
</feature>
<feature type="compositionally biased region" description="Basic and acidic residues" evidence="4">
    <location>
        <begin position="837"/>
        <end position="846"/>
    </location>
</feature>
<feature type="compositionally biased region" description="Low complexity" evidence="4">
    <location>
        <begin position="867"/>
        <end position="876"/>
    </location>
</feature>
<feature type="compositionally biased region" description="Low complexity" evidence="4">
    <location>
        <begin position="908"/>
        <end position="917"/>
    </location>
</feature>
<feature type="compositionally biased region" description="Low complexity" evidence="4">
    <location>
        <begin position="971"/>
        <end position="990"/>
    </location>
</feature>
<feature type="compositionally biased region" description="Low complexity" evidence="4">
    <location>
        <begin position="999"/>
        <end position="1011"/>
    </location>
</feature>
<feature type="compositionally biased region" description="Low complexity" evidence="4">
    <location>
        <begin position="1088"/>
        <end position="1104"/>
    </location>
</feature>
<feature type="compositionally biased region" description="Pro residues" evidence="4">
    <location>
        <begin position="1106"/>
        <end position="1115"/>
    </location>
</feature>
<feature type="compositionally biased region" description="Low complexity" evidence="4">
    <location>
        <begin position="1116"/>
        <end position="1140"/>
    </location>
</feature>
<feature type="compositionally biased region" description="Low complexity" evidence="4">
    <location>
        <begin position="1259"/>
        <end position="1268"/>
    </location>
</feature>
<feature type="compositionally biased region" description="Pro residues" evidence="4">
    <location>
        <begin position="1380"/>
        <end position="1398"/>
    </location>
</feature>
<feature type="compositionally biased region" description="Pro residues" evidence="4">
    <location>
        <begin position="1454"/>
        <end position="1469"/>
    </location>
</feature>
<feature type="compositionally biased region" description="Low complexity" evidence="4">
    <location>
        <begin position="1485"/>
        <end position="1494"/>
    </location>
</feature>
<feature type="compositionally biased region" description="Pro residues" evidence="4">
    <location>
        <begin position="1526"/>
        <end position="1541"/>
    </location>
</feature>
<feature type="compositionally biased region" description="Low complexity" evidence="4">
    <location>
        <begin position="1542"/>
        <end position="1554"/>
    </location>
</feature>
<feature type="compositionally biased region" description="Pro residues" evidence="4">
    <location>
        <begin position="1560"/>
        <end position="1569"/>
    </location>
</feature>
<feature type="binding site" evidence="1">
    <location>
        <position position="1657"/>
    </location>
    <ligand>
        <name>Ca(2+)</name>
        <dbReference type="ChEBI" id="CHEBI:29108"/>
    </ligand>
</feature>
<feature type="binding site" evidence="1">
    <location>
        <position position="1659"/>
    </location>
    <ligand>
        <name>Ca(2+)</name>
        <dbReference type="ChEBI" id="CHEBI:29108"/>
    </ligand>
</feature>
<feature type="binding site" evidence="1">
    <location>
        <position position="1660"/>
    </location>
    <ligand>
        <name>Ca(2+)</name>
        <dbReference type="ChEBI" id="CHEBI:29108"/>
    </ligand>
</feature>
<feature type="binding site" evidence="1">
    <location>
        <position position="1662"/>
    </location>
    <ligand>
        <name>Ca(2+)</name>
        <dbReference type="ChEBI" id="CHEBI:29108"/>
    </ligand>
</feature>
<feature type="binding site" evidence="1">
    <location>
        <position position="1665"/>
    </location>
    <ligand>
        <name>Ca(2+)</name>
        <dbReference type="ChEBI" id="CHEBI:29108"/>
    </ligand>
</feature>
<feature type="modified residue" description="Sulfotyrosine" evidence="2">
    <location>
        <position position="234"/>
    </location>
</feature>
<feature type="modified residue" description="Sulfotyrosine" evidence="2">
    <location>
        <position position="236"/>
    </location>
</feature>
<feature type="modified residue" description="Sulfotyrosine" evidence="2">
    <location>
        <position position="240"/>
    </location>
</feature>
<feature type="modified residue" description="Sulfotyrosine" evidence="2">
    <location>
        <position position="262"/>
    </location>
</feature>
<feature type="modified residue" description="Sulfotyrosine" evidence="2">
    <location>
        <position position="263"/>
    </location>
</feature>
<feature type="modified residue" description="Sulfotyrosine" evidence="2">
    <location>
        <position position="338"/>
    </location>
</feature>
<feature type="modified residue" description="Sulfotyrosine" evidence="2">
    <location>
        <position position="340"/>
    </location>
</feature>
<feature type="modified residue" description="Sulfotyrosine" evidence="2">
    <location>
        <position position="346"/>
    </location>
</feature>
<feature type="modified residue" description="Sulfotyrosine" evidence="2">
    <location>
        <position position="347"/>
    </location>
</feature>
<feature type="modified residue" description="Sulfotyrosine" evidence="2">
    <location>
        <position position="416"/>
    </location>
</feature>
<feature type="modified residue" description="Sulfotyrosine" evidence="2">
    <location>
        <position position="417"/>
    </location>
</feature>
<feature type="modified residue" description="Sulfotyrosine" evidence="2">
    <location>
        <position position="420"/>
    </location>
</feature>
<feature type="modified residue" description="Sulfotyrosine" evidence="2">
    <location>
        <position position="421"/>
    </location>
</feature>
<feature type="modified residue" description="Hydroxyproline" evidence="14">
    <location>
        <position position="570"/>
    </location>
</feature>
<feature type="modified residue" description="Hydroxyproline" evidence="14">
    <location>
        <position position="576"/>
    </location>
</feature>
<feature type="modified residue" description="Hydroxyproline" evidence="11">
    <location>
        <position position="621"/>
    </location>
</feature>
<feature type="modified residue" description="5-hydroxylysine" evidence="11">
    <location>
        <position position="627"/>
    </location>
</feature>
<feature type="modified residue" description="Hydroxyproline" evidence="11">
    <location>
        <position position="639"/>
    </location>
</feature>
<feature type="modified residue" description="5-hydroxylysine" evidence="11">
    <location>
        <position position="642"/>
    </location>
</feature>
<feature type="modified residue" description="Hydroxyproline" evidence="11">
    <location>
        <position position="648"/>
    </location>
</feature>
<feature type="modified residue" description="Hydroxyproline" evidence="11">
    <location>
        <position position="654"/>
    </location>
</feature>
<feature type="modified residue" description="Hydroxyproline" evidence="11">
    <location>
        <position position="657"/>
    </location>
</feature>
<feature type="modified residue" description="Hydroxyproline" evidence="11">
    <location>
        <position position="675"/>
    </location>
</feature>
<feature type="modified residue" description="Hydroxyproline" evidence="11">
    <location>
        <position position="678"/>
    </location>
</feature>
<feature type="modified residue" description="5-hydroxylysine" evidence="11">
    <location>
        <position position="687"/>
    </location>
</feature>
<feature type="modified residue" description="Hydroxyproline" evidence="11">
    <location>
        <position position="690"/>
    </location>
</feature>
<feature type="modified residue" description="Hydroxyproline" evidence="11">
    <location>
        <position position="696"/>
    </location>
</feature>
<feature type="modified residue" description="Hydroxyproline" evidence="11">
    <location>
        <position position="705"/>
    </location>
</feature>
<feature type="modified residue" description="5-hydroxylysine" evidence="11">
    <location>
        <position position="708"/>
    </location>
</feature>
<feature type="modified residue" description="Hydroxyproline" evidence="11">
    <location>
        <position position="717"/>
    </location>
</feature>
<feature type="modified residue" description="Hydroxyproline" evidence="11">
    <location>
        <position position="720"/>
    </location>
</feature>
<feature type="modified residue" description="Hydroxyproline" evidence="11">
    <location>
        <position position="726"/>
    </location>
</feature>
<feature type="modified residue" description="Hydroxyproline" evidence="11">
    <location>
        <position position="732"/>
    </location>
</feature>
<feature type="modified residue" description="5-hydroxylysine" evidence="11">
    <location>
        <position position="744"/>
    </location>
</feature>
<feature type="modified residue" description="Hydroxyproline" evidence="11">
    <location>
        <position position="750"/>
    </location>
</feature>
<feature type="modified residue" description="Hydroxyproline" evidence="11 14">
    <location>
        <position position="756"/>
    </location>
</feature>
<feature type="modified residue" description="Hydroxyproline" evidence="11 14">
    <location>
        <position position="762"/>
    </location>
</feature>
<feature type="modified residue" description="Hydroxyproline" evidence="11">
    <location>
        <position position="765"/>
    </location>
</feature>
<feature type="modified residue" description="Hydroxyproline" evidence="11">
    <location>
        <position position="771"/>
    </location>
</feature>
<feature type="modified residue" description="5-hydroxylysine" evidence="11">
    <location>
        <position position="774"/>
    </location>
</feature>
<feature type="modified residue" description="Hydroxyproline" evidence="11">
    <location>
        <position position="780"/>
    </location>
</feature>
<feature type="modified residue" description="Hydroxyproline" evidence="11">
    <location>
        <position position="789"/>
    </location>
</feature>
<feature type="modified residue" description="5-hydroxylysine" evidence="11">
    <location>
        <position position="795"/>
    </location>
</feature>
<feature type="modified residue" description="5-hydroxylysine" evidence="11">
    <location>
        <position position="804"/>
    </location>
</feature>
<feature type="modified residue" description="5-hydroxylysine" evidence="11">
    <location>
        <position position="807"/>
    </location>
</feature>
<feature type="modified residue" description="5-hydroxylysine" evidence="11">
    <location>
        <position position="810"/>
    </location>
</feature>
<feature type="modified residue" description="Hydroxyproline" evidence="11">
    <location>
        <position position="816"/>
    </location>
</feature>
<feature type="modified residue" description="5-hydroxylysine" evidence="11">
    <location>
        <position position="819"/>
    </location>
</feature>
<feature type="modified residue" description="Hydroxyproline" evidence="11 14">
    <location>
        <position position="834"/>
    </location>
</feature>
<feature type="modified residue" description="5-hydroxylysine" evidence="11 14">
    <location>
        <position position="846"/>
    </location>
</feature>
<feature type="modified residue" description="Hydroxyproline" evidence="11 14">
    <location>
        <position position="861"/>
    </location>
</feature>
<feature type="modified residue" description="5-hydroxylysine" evidence="11 14">
    <location>
        <position position="864"/>
    </location>
</feature>
<feature type="modified residue" description="Hydroxyproline" evidence="11 14">
    <location>
        <position position="870"/>
    </location>
</feature>
<feature type="modified residue" description="Hydroxyproline" evidence="11 14">
    <location>
        <position position="873"/>
    </location>
</feature>
<feature type="modified residue" description="Hydroxyproline" evidence="11 14">
    <location>
        <position position="876"/>
    </location>
</feature>
<feature type="modified residue" description="5-hydroxylysine" evidence="11 14">
    <location>
        <position position="882"/>
    </location>
</feature>
<feature type="modified residue" description="Hydroxyproline" evidence="11 14">
    <location>
        <position position="888"/>
    </location>
</feature>
<feature type="modified residue" description="Hydroxyproline" evidence="11 14">
    <location>
        <position position="891"/>
    </location>
</feature>
<feature type="modified residue" description="5-hydroxylysine" evidence="11 14">
    <location>
        <position position="897"/>
    </location>
</feature>
<feature type="modified residue" description="Hydroxyproline" evidence="11 14">
    <location>
        <position position="903"/>
    </location>
</feature>
<feature type="modified residue" description="Hydroxyproline" evidence="11 14">
    <location>
        <position position="906"/>
    </location>
</feature>
<feature type="modified residue" description="Hydroxyproline" evidence="14">
    <location>
        <position position="930"/>
    </location>
</feature>
<feature type="modified residue" description="Hydroxyproline" evidence="14">
    <location>
        <position position="945"/>
    </location>
</feature>
<feature type="modified residue" description="Hydroxyproline" evidence="14">
    <location>
        <position position="1017"/>
    </location>
</feature>
<feature type="modified residue" description="Hydroxyproline" evidence="14">
    <location>
        <position position="1020"/>
    </location>
</feature>
<feature type="modified residue" description="Hydroxyproline" evidence="14">
    <location>
        <position position="1023"/>
    </location>
</feature>
<feature type="modified residue" description="Hydroxyproline" evidence="14">
    <location>
        <position position="1029"/>
    </location>
</feature>
<feature type="modified residue" description="Hydroxyproline" evidence="14">
    <location>
        <position position="1221"/>
    </location>
</feature>
<feature type="modified residue" description="Hydroxyproline" evidence="14">
    <location>
        <position position="1224"/>
    </location>
</feature>
<feature type="modified residue" description="Hydroxyproline" evidence="14">
    <location>
        <position position="1467"/>
    </location>
</feature>
<feature type="modified residue" description="Hydroxyproline" evidence="14">
    <location>
        <position position="1470"/>
    </location>
</feature>
<feature type="modified residue" description="Sulfotyrosine" evidence="2">
    <location>
        <position position="1601"/>
    </location>
</feature>
<feature type="modified residue" description="Sulfotyrosine" evidence="2">
    <location>
        <position position="1604"/>
    </location>
</feature>
<feature type="disulfide bond" evidence="3">
    <location>
        <begin position="1639"/>
        <end position="1671"/>
    </location>
</feature>
<feature type="disulfide bond" description="Interchain (with C-1662)" evidence="3">
    <location>
        <position position="1645"/>
    </location>
</feature>
<feature type="disulfide bond" description="Interchain (with C-1645)" evidence="3">
    <location>
        <position position="1662"/>
    </location>
</feature>
<feature type="disulfide bond" evidence="3">
    <location>
        <begin position="1680"/>
        <end position="1835"/>
    </location>
</feature>
<feature type="disulfide bond" evidence="3">
    <location>
        <begin position="1746"/>
        <end position="1789"/>
    </location>
</feature>
<feature type="splice variant" id="VSP_059655" description="In isoform 2.">
    <original>ARITSWPKENPGSWFSEFKRGK</original>
    <variation>SKMARWPKEQPSTWYSQYKRGS</variation>
    <location>
        <begin position="1690"/>
        <end position="1711"/>
    </location>
</feature>
<feature type="sequence variant" id="VAR_057902" description="In EDSCL1; not or less efficiently secreted into the extracellular matrix; dbSNP:rs1831316527." evidence="9">
    <original>L</original>
    <variation>P</variation>
    <location>
        <position position="25"/>
    </location>
</feature>
<feature type="sequence variant" id="VAR_057903" description="In EDSCL1; not or less efficiently secreted into the extracellular matrix; dbSNP:rs1831316527." evidence="9">
    <original>L</original>
    <variation>R</variation>
    <location>
        <position position="25"/>
    </location>
</feature>
<feature type="sequence variant" id="VAR_057904" description="In dbSNP:rs147589613." evidence="8 13">
    <original>A</original>
    <variation>D</variation>
    <location>
        <position position="114"/>
    </location>
</feature>
<feature type="sequence variant" id="VAR_085830" description="In FMDMF; uncertain significance; dbSNP:rs142114921." evidence="13">
    <original>Q</original>
    <variation>E</variation>
    <location>
        <position position="123"/>
    </location>
</feature>
<feature type="sequence variant" id="VAR_057905" description="In dbSNP:rs138579182." evidence="8">
    <original>D</original>
    <variation>N</variation>
    <location>
        <position position="192"/>
    </location>
</feature>
<feature type="sequence variant" id="VAR_057906" description="Risk factor for cervical artery dissection." evidence="5">
    <original>D</original>
    <variation>N</variation>
    <location>
        <position position="229"/>
    </location>
</feature>
<feature type="sequence variant" id="VAR_085831" description="In FMDMF; dbSNP:rs878853652." evidence="13">
    <original>G</original>
    <variation>S</variation>
    <location>
        <position position="514"/>
    </location>
</feature>
<feature type="sequence variant" id="VAR_015412" description="In EDSCL1; dbSNP:rs61735045." evidence="6 7 8">
    <original>G</original>
    <variation>S</variation>
    <location>
        <position position="530"/>
    </location>
</feature>
<feature type="sequence variant" id="VAR_085832" description="In FMDMF; uncertain significance; dbSNP:rs147329970." evidence="13">
    <original>R</original>
    <variation>W</variation>
    <location>
        <position position="611"/>
    </location>
</feature>
<feature type="sequence variant" id="VAR_075702" description="In dbSNP:rs139788610." evidence="12">
    <original>E</original>
    <variation>V</variation>
    <location>
        <position position="863"/>
    </location>
</feature>
<feature type="sequence variant" id="VAR_064702" description="Found in a renal cell carcinoma case; somatic mutation; dbSNP:rs772211736." evidence="10">
    <original>P</original>
    <variation>L</variation>
    <location>
        <position position="908"/>
    </location>
</feature>
<feature type="sequence variant" id="VAR_057908" description="In dbSNP:rs61736966." evidence="8">
    <original>N</original>
    <variation>S</variation>
    <location>
        <position position="951"/>
    </location>
</feature>
<feature type="sequence variant" id="VAR_075703" description="In dbSNP:rs149616140." evidence="12">
    <original>V</original>
    <variation>M</variation>
    <location>
        <position position="1140"/>
    </location>
</feature>
<feature type="sequence variant" id="VAR_085833" description="In FMDMF; uncertain significance; dbSNP:rs368305377." evidence="13">
    <original>P</original>
    <variation>L</variation>
    <location>
        <position position="1164"/>
    </location>
</feature>
<feature type="sequence variant" id="VAR_085834" description="In FMDMF; uncertain significance; dbSNP:rs765217611." evidence="13">
    <original>P</original>
    <variation>S</variation>
    <location>
        <position position="1400"/>
    </location>
</feature>
<feature type="sequence variant" id="VAR_057909" description="In EDSCL1." evidence="8">
    <original>G</original>
    <variation>C</variation>
    <location>
        <position position="1486"/>
    </location>
</feature>
<feature type="sequence variant" id="VAR_015413" description="In EDSCL1." evidence="6">
    <original>G</original>
    <variation>D</variation>
    <location>
        <position position="1489"/>
    </location>
</feature>
<feature type="sequence variant" id="VAR_001808" description="In EDSCL1; dbSNP:rs80338764." evidence="15">
    <original>C</original>
    <variation>S</variation>
    <location>
        <position position="1639"/>
    </location>
</feature>
<feature type="sequence conflict" description="In Ref. 2; AAA59993." evidence="18" ref="2">
    <original>QL</original>
    <variation>HV</variation>
    <location>
        <begin position="82"/>
        <end position="83"/>
    </location>
</feature>
<feature type="sequence conflict" description="In Ref. 2; AAA59993." evidence="18" ref="2">
    <original>A</original>
    <variation>R</variation>
    <location>
        <position position="390"/>
    </location>
</feature>
<feature type="sequence conflict" description="In Ref. 4; AA sequence." evidence="18" ref="4">
    <original>E</original>
    <variation>G</variation>
    <location>
        <position position="641"/>
    </location>
</feature>
<feature type="sequence conflict" description="In Ref. 4; AA sequence." evidence="18" ref="4">
    <original>P</original>
    <variation>L</variation>
    <location>
        <position position="650"/>
    </location>
</feature>
<feature type="sequence conflict" description="In Ref. 4; AA sequence." evidence="18" ref="4">
    <original>R</original>
    <variation>E</variation>
    <location>
        <position position="663"/>
    </location>
</feature>
<feature type="sequence conflict" description="In Ref. 4; AA sequence." evidence="18" ref="4">
    <original>E</original>
    <variation>Q</variation>
    <location>
        <position position="668"/>
    </location>
</feature>
<feature type="sequence conflict" description="In Ref. 1; BAA14323." evidence="18" ref="1">
    <original>E</original>
    <variation>K</variation>
    <location>
        <position position="677"/>
    </location>
</feature>
<feature type="sequence conflict" description="In Ref. 4; AA sequence." evidence="18" ref="4">
    <original>E</original>
    <variation>Q</variation>
    <location>
        <position position="677"/>
    </location>
</feature>
<feature type="sequence conflict" description="In Ref. 4; AA sequence." evidence="18" ref="4">
    <original>L</original>
    <variation>P</variation>
    <location>
        <position position="684"/>
    </location>
</feature>
<feature type="sequence conflict" description="In Ref. 4; AA sequence." evidence="18" ref="4">
    <original>PPGPPGVT</original>
    <variation>VTGEPGAP</variation>
    <location>
        <begin position="692"/>
        <end position="699"/>
    </location>
</feature>
<feature type="sequence conflict" description="In Ref. 4; AA sequence." evidence="18" ref="4">
    <original>G</original>
    <variation>Q</variation>
    <location>
        <position position="727"/>
    </location>
</feature>
<feature type="sequence conflict" description="In Ref. 4; AA sequence." evidence="18" ref="4">
    <original>P</original>
    <variation>L</variation>
    <location>
        <position position="741"/>
    </location>
</feature>
<feature type="sequence conflict" description="In Ref. 4; AA sequence." evidence="18" ref="4">
    <original>L</original>
    <variation>Q</variation>
    <location>
        <position position="747"/>
    </location>
</feature>
<feature type="sequence conflict" description="In Ref. 4; AA sequence." evidence="18" ref="4">
    <original>P</original>
    <variation>A</variation>
    <location>
        <position position="753"/>
    </location>
</feature>
<feature type="sequence conflict" description="In Ref. 4; AA sequence." evidence="18" ref="4">
    <original>D</original>
    <variation>N</variation>
    <location>
        <position position="759"/>
    </location>
</feature>
<feature type="sequence conflict" description="In Ref. 4; AA sequence." evidence="18" ref="4">
    <original>GQ</original>
    <variation>QK</variation>
    <location>
        <begin position="776"/>
        <end position="777"/>
    </location>
</feature>
<feature type="sequence conflict" description="In Ref. 5; AA sequence." evidence="18" ref="5">
    <original>GGPNGDP</original>
    <variation>IGPPGPR</variation>
    <location>
        <begin position="849"/>
        <end position="855"/>
    </location>
</feature>
<feature type="sequence conflict" description="In Ref. 5; AA sequence." evidence="18" ref="5">
    <original>N</original>
    <variation>D</variation>
    <location>
        <position position="894"/>
    </location>
</feature>
<feature type="sequence conflict" description="In Ref. 1; BAA14323." evidence="18" ref="1">
    <original>LPGEG</original>
    <variation>PSGRS</variation>
    <location>
        <begin position="1295"/>
        <end position="1299"/>
    </location>
</feature>
<feature type="sequence conflict" description="In Ref. 1; BAA14323." evidence="18" ref="1">
    <original>K</original>
    <variation>R</variation>
    <location>
        <position position="1554"/>
    </location>
</feature>
<feature type="sequence conflict" description="In Ref. 2; AAA59993." evidence="18" ref="2">
    <original>V</original>
    <variation>A</variation>
    <location>
        <position position="1813"/>
    </location>
</feature>
<proteinExistence type="evidence at protein level"/>
<accession>P20908</accession>
<accession>A0A087WXW9</accession>
<accession>Q15094</accession>
<accession>Q5SUX4</accession>
<keyword id="KW-0002">3D-structure</keyword>
<keyword id="KW-0025">Alternative splicing</keyword>
<keyword id="KW-0106">Calcium</keyword>
<keyword id="KW-0176">Collagen</keyword>
<keyword id="KW-0903">Direct protein sequencing</keyword>
<keyword id="KW-0225">Disease variant</keyword>
<keyword id="KW-1015">Disulfide bond</keyword>
<keyword id="KW-0248">Ehlers-Danlos syndrome</keyword>
<keyword id="KW-0272">Extracellular matrix</keyword>
<keyword id="KW-0358">Heparin-binding</keyword>
<keyword id="KW-0379">Hydroxylation</keyword>
<keyword id="KW-0479">Metal-binding</keyword>
<keyword id="KW-1267">Proteomics identification</keyword>
<keyword id="KW-1185">Reference proteome</keyword>
<keyword id="KW-0677">Repeat</keyword>
<keyword id="KW-0964">Secreted</keyword>
<keyword id="KW-0732">Signal</keyword>
<keyword id="KW-0765">Sulfation</keyword>
<reference key="1">
    <citation type="journal article" date="1991" name="J. Biol. Chem.">
        <title>Complete primary structure of human collagen alpha 1 (V) chain.</title>
        <authorList>
            <person name="Takahara K."/>
            <person name="Seto Y."/>
            <person name="Okasawa K."/>
            <person name="Okamoto N."/>
            <person name="Noda A."/>
            <person name="Yaoi Y."/>
            <person name="Kato I."/>
        </authorList>
    </citation>
    <scope>NUCLEOTIDE SEQUENCE [MRNA] (ISOFORM 1)</scope>
    <scope>PROTEIN SEQUENCE OF 556-565 (ISOFORMS 1/2)</scope>
</reference>
<reference key="2">
    <citation type="journal article" date="1991" name="J. Biol. Chem.">
        <title>The pro-alpha-1(V) collagen chain: complete primary structure, distribution of expression, and comparison with the pro-alpha-1(XI) collagen chain.</title>
        <authorList>
            <person name="Greenspan D.S."/>
            <person name="Cheng W."/>
            <person name="Hoffman G.G."/>
        </authorList>
    </citation>
    <scope>NUCLEOTIDE SEQUENCE [MRNA] (ISOFORM 1)</scope>
</reference>
<reference key="3">
    <citation type="journal article" date="2004" name="Nature">
        <title>DNA sequence and analysis of human chromosome 9.</title>
        <authorList>
            <person name="Humphray S.J."/>
            <person name="Oliver K."/>
            <person name="Hunt A.R."/>
            <person name="Plumb R.W."/>
            <person name="Loveland J.E."/>
            <person name="Howe K.L."/>
            <person name="Andrews T.D."/>
            <person name="Searle S."/>
            <person name="Hunt S.E."/>
            <person name="Scott C.E."/>
            <person name="Jones M.C."/>
            <person name="Ainscough R."/>
            <person name="Almeida J.P."/>
            <person name="Ambrose K.D."/>
            <person name="Ashwell R.I.S."/>
            <person name="Babbage A.K."/>
            <person name="Babbage S."/>
            <person name="Bagguley C.L."/>
            <person name="Bailey J."/>
            <person name="Banerjee R."/>
            <person name="Barker D.J."/>
            <person name="Barlow K.F."/>
            <person name="Bates K."/>
            <person name="Beasley H."/>
            <person name="Beasley O."/>
            <person name="Bird C.P."/>
            <person name="Bray-Allen S."/>
            <person name="Brown A.J."/>
            <person name="Brown J.Y."/>
            <person name="Burford D."/>
            <person name="Burrill W."/>
            <person name="Burton J."/>
            <person name="Carder C."/>
            <person name="Carter N.P."/>
            <person name="Chapman J.C."/>
            <person name="Chen Y."/>
            <person name="Clarke G."/>
            <person name="Clark S.Y."/>
            <person name="Clee C.M."/>
            <person name="Clegg S."/>
            <person name="Collier R.E."/>
            <person name="Corby N."/>
            <person name="Crosier M."/>
            <person name="Cummings A.T."/>
            <person name="Davies J."/>
            <person name="Dhami P."/>
            <person name="Dunn M."/>
            <person name="Dutta I."/>
            <person name="Dyer L.W."/>
            <person name="Earthrowl M.E."/>
            <person name="Faulkner L."/>
            <person name="Fleming C.J."/>
            <person name="Frankish A."/>
            <person name="Frankland J.A."/>
            <person name="French L."/>
            <person name="Fricker D.G."/>
            <person name="Garner P."/>
            <person name="Garnett J."/>
            <person name="Ghori J."/>
            <person name="Gilbert J.G.R."/>
            <person name="Glison C."/>
            <person name="Grafham D.V."/>
            <person name="Gribble S."/>
            <person name="Griffiths C."/>
            <person name="Griffiths-Jones S."/>
            <person name="Grocock R."/>
            <person name="Guy J."/>
            <person name="Hall R.E."/>
            <person name="Hammond S."/>
            <person name="Harley J.L."/>
            <person name="Harrison E.S.I."/>
            <person name="Hart E.A."/>
            <person name="Heath P.D."/>
            <person name="Henderson C.D."/>
            <person name="Hopkins B.L."/>
            <person name="Howard P.J."/>
            <person name="Howden P.J."/>
            <person name="Huckle E."/>
            <person name="Johnson C."/>
            <person name="Johnson D."/>
            <person name="Joy A.A."/>
            <person name="Kay M."/>
            <person name="Keenan S."/>
            <person name="Kershaw J.K."/>
            <person name="Kimberley A.M."/>
            <person name="King A."/>
            <person name="Knights A."/>
            <person name="Laird G.K."/>
            <person name="Langford C."/>
            <person name="Lawlor S."/>
            <person name="Leongamornlert D.A."/>
            <person name="Leversha M."/>
            <person name="Lloyd C."/>
            <person name="Lloyd D.M."/>
            <person name="Lovell J."/>
            <person name="Martin S."/>
            <person name="Mashreghi-Mohammadi M."/>
            <person name="Matthews L."/>
            <person name="McLaren S."/>
            <person name="McLay K.E."/>
            <person name="McMurray A."/>
            <person name="Milne S."/>
            <person name="Nickerson T."/>
            <person name="Nisbett J."/>
            <person name="Nordsiek G."/>
            <person name="Pearce A.V."/>
            <person name="Peck A.I."/>
            <person name="Porter K.M."/>
            <person name="Pandian R."/>
            <person name="Pelan S."/>
            <person name="Phillimore B."/>
            <person name="Povey S."/>
            <person name="Ramsey Y."/>
            <person name="Rand V."/>
            <person name="Scharfe M."/>
            <person name="Sehra H.K."/>
            <person name="Shownkeen R."/>
            <person name="Sims S.K."/>
            <person name="Skuce C.D."/>
            <person name="Smith M."/>
            <person name="Steward C.A."/>
            <person name="Swarbreck D."/>
            <person name="Sycamore N."/>
            <person name="Tester J."/>
            <person name="Thorpe A."/>
            <person name="Tracey A."/>
            <person name="Tromans A."/>
            <person name="Thomas D.W."/>
            <person name="Wall M."/>
            <person name="Wallis J.M."/>
            <person name="West A.P."/>
            <person name="Whitehead S.L."/>
            <person name="Willey D.L."/>
            <person name="Williams S.A."/>
            <person name="Wilming L."/>
            <person name="Wray P.W."/>
            <person name="Young L."/>
            <person name="Ashurst J.L."/>
            <person name="Coulson A."/>
            <person name="Blocker H."/>
            <person name="Durbin R.M."/>
            <person name="Sulston J.E."/>
            <person name="Hubbard T."/>
            <person name="Jackson M.J."/>
            <person name="Bentley D.R."/>
            <person name="Beck S."/>
            <person name="Rogers J."/>
            <person name="Dunham I."/>
        </authorList>
    </citation>
    <scope>NUCLEOTIDE SEQUENCE [LARGE SCALE GENOMIC DNA]</scope>
</reference>
<reference key="4">
    <citation type="journal article" date="1989" name="Arch. Biochem. Biophys.">
        <title>Covalent structure of collagen: amino acid sequence of three cyanogen bromide-derived peptides from human alpha 1(V) collagen chain.</title>
        <authorList>
            <person name="Seyer J.M."/>
            <person name="Kang A.H."/>
        </authorList>
    </citation>
    <scope>PROTEIN SEQUENCE OF 621-822 (ISOFORMS 1/2)</scope>
    <scope>HYDROXYLATION AT PRO-621; LYS-627; PRO-639; LYS-642; PRO-648; PRO-654; PRO-657; PRO-675; PRO-678; LYS-687; PRO-690; PRO-696; PRO-705; LYS-708; PRO-717; PRO-720; PRO-726; PRO-732; LYS-744; PRO-750; PRO-756; PRO-762; PRO-765; PRO-771; LYS-774; PRO-780; PRO-789; LYS-795; LYS-804; LYS-807; LYS-810; PRO-816 AND LYS-819</scope>
    <source>
        <tissue>Chorioamniotic membrane</tissue>
    </source>
</reference>
<reference key="5">
    <citation type="journal article" date="1990" name="Biochim. Biophys. Acta">
        <title>Primary structure of the heparin-binding site of type V collagen.</title>
        <authorList>
            <person name="Yaoi Y."/>
            <person name="Hashimoto K."/>
            <person name="Koitabashi H."/>
            <person name="Takahara K."/>
            <person name="Ito M."/>
            <person name="Kato I."/>
        </authorList>
    </citation>
    <scope>PROTEIN SEQUENCE OF 823-950 (ISOFORMS 1/2)</scope>
    <scope>HEPARIN-BINDING</scope>
</reference>
<reference key="6">
    <citation type="journal article" date="1992" name="Biol. Chem. Hoppe-Seyler">
        <title>Isolation of the alpha 3-chain of human type V collagen and characterization by partial sequencing.</title>
        <authorList>
            <person name="Mann K."/>
        </authorList>
    </citation>
    <scope>PROTEIN SEQUENCE OF 556-571 (ISOFORMS 1/2)</scope>
    <source>
        <tissue>Placenta</tissue>
    </source>
</reference>
<reference key="7">
    <citation type="journal article" date="1994" name="Eur. J. Biochem.">
        <title>Diversity in the processing events at the N-terminus of type-V collagen.</title>
        <authorList>
            <person name="Moradi-Ameli M."/>
            <person name="Rousseau J.C."/>
            <person name="Kleman J.P."/>
            <person name="Champliaud M.-F."/>
            <person name="Boutillon M.-M."/>
            <person name="Bernillon J."/>
            <person name="Wallach J.M."/>
            <person name="van der Rest M."/>
        </authorList>
    </citation>
    <scope>PROTEIN SEQUENCE OF 565-576; 756-772; 1012-1029; 1219-1232 AND 1465-1477 (ISOFORMS 1/2)</scope>
    <scope>HYDROXYLATION AT PRO-570; PRO-576; PRO-756; PRO-762; PRO-834; LYS-846; PRO-861; LYS-864; PRO-870; PRO-873; PRO-876; LYS-882; PRO-888; PRO-891; LYS-897; PRO-903; PRO-906; PRO-930; PRO-945; PRO-1017; PRO-1020; PRO-1023; PRO-1029; PRO-1221; PRO-1224; PRO-1467 AND PRO-1470</scope>
    <source>
        <tissue>Chorioamniotic membrane</tissue>
    </source>
</reference>
<reference key="8">
    <citation type="journal article" date="1997" name="J. Biol. Chem.">
        <title>The membrane-spanning proteoglycan NG2 binds to collagens V and VI through the central nonglobular domain of its core protein.</title>
        <authorList>
            <person name="Tillet E."/>
            <person name="Ruggiero F."/>
            <person name="Nishiyama A."/>
            <person name="Stallcup W.B."/>
        </authorList>
    </citation>
    <scope>INTERACTION WITH CSPG4</scope>
</reference>
<reference key="9">
    <citation type="journal article" date="2012" name="Connect. Tissue Res.">
        <title>Characterization of tissue-specific and developmentally regulated alternative splicing of exon 64 in the COL5A1 gene.</title>
        <authorList>
            <person name="Mitchell A.L."/>
            <person name="Judis L.M."/>
            <person name="Schwarze U."/>
            <person name="Vaynshtok P.M."/>
            <person name="Drumm M.L."/>
            <person name="Byers P.H."/>
        </authorList>
    </citation>
    <scope>ALTERNATIVE SPLICING (ISOFORMS 1 AND 2)</scope>
</reference>
<reference key="10">
    <citation type="journal article" date="1997" name="Am. J. Hum. Genet.">
        <title>Mutations in the COL5A1 gene are causal in the Ehlers-Danlos syndromes I and II.</title>
        <authorList>
            <person name="de Paepe A."/>
            <person name="Nuytinck L."/>
            <person name="Hausser I."/>
            <person name="Anton-Lamprecht I."/>
            <person name="Naeyaert J.-M."/>
        </authorList>
    </citation>
    <scope>INVOLVEMENT IN EDSCL1</scope>
    <scope>VARIANT EDSCL1 SER-1639</scope>
</reference>
<reference key="11">
    <citation type="journal article" date="1999" name="Stroke">
        <title>Mutations in the COL5A1 coding sequence are not common in patients with spontaneous cervical artery dissections.</title>
        <authorList>
            <person name="Grond-Ginsbach C."/>
            <person name="Weber R."/>
            <person name="Haas J."/>
            <person name="Orberk E."/>
            <person name="Kunz S."/>
            <person name="Busse O."/>
            <person name="Hausser I."/>
            <person name="Brandt T."/>
            <person name="Wildemann B."/>
        </authorList>
    </citation>
    <scope>VARIANT ASN-229</scope>
    <scope>ASSOCIATION WITH INCREASED RISK OF CERVICAL ARTERY DISSECTION</scope>
</reference>
<reference key="12">
    <citation type="journal article" date="2000" name="Am. J. Med. Genet.">
        <title>Compound heterozygosity for a disease-causing G1489E and disease-modifying G530S substitution in COL5A1 of a patient with the classical type of Ehlers-Danlos syndrome: an explanation of intrafamilial variability?</title>
        <authorList>
            <person name="Giunta C."/>
            <person name="Steinmann B."/>
        </authorList>
    </citation>
    <scope>VARIANTS EDSCL1 SER-530 AND ASP-1489</scope>
</reference>
<reference key="13">
    <citation type="journal article" date="2000" name="Am. J. Med. Genet.">
        <authorList>
            <person name="Giunta C."/>
            <person name="Steinmann B."/>
        </authorList>
    </citation>
    <scope>ERRATUM OF PUBMED:10602121</scope>
</reference>
<reference key="14">
    <citation type="journal article" date="2002" name="Am. J. Med. Genet.">
        <title>Homozygous Gly530Ser substitution in COL5A1 causes mild classical Ehlers-Danlos syndrome.</title>
        <authorList>
            <person name="Giunta C."/>
            <person name="Nuytinck L."/>
            <person name="Raghunath M."/>
            <person name="Hausser I."/>
            <person name="De Paepe A."/>
            <person name="Steinmann B."/>
        </authorList>
    </citation>
    <scope>VARIANT EDSCL1 SER-530</scope>
</reference>
<reference key="15">
    <citation type="journal article" date="2005" name="Hum. Mutat.">
        <title>The molecular basis of classic Ehlers-Danlos syndrome: a comprehensive study of biochemical and molecular findings in 48 unrelated patients.</title>
        <authorList>
            <person name="Malfait F."/>
            <person name="Coucke P."/>
            <person name="Symoens S."/>
            <person name="Loeys B."/>
            <person name="Nuytinck L."/>
            <person name="De Paepe A."/>
        </authorList>
    </citation>
    <scope>VARIANTS EDSCL1 SER-530 AND CYS-1486</scope>
    <scope>VARIANTS ASP-114; ASN-192 AND SER-951</scope>
</reference>
<reference key="16">
    <citation type="journal article" date="2009" name="Hum. Mutat.">
        <title>COL5A1 signal peptide mutations interfere with protein secretion and cause classic Ehlers-Danlos syndrome.</title>
        <authorList>
            <person name="Symoens S."/>
            <person name="Malfait F."/>
            <person name="Renard M."/>
            <person name="Andre J."/>
            <person name="Hausser I."/>
            <person name="Loeys B."/>
            <person name="Coucke P."/>
            <person name="De Paepe A."/>
        </authorList>
    </citation>
    <scope>VARIANTS EDSCL1 ARG-25 AND PRO-25</scope>
    <scope>CHARACTERIZATION OF VARIANTS EDSCL1 ARG-25 AND PRO-25</scope>
</reference>
<reference key="17">
    <citation type="journal article" date="2011" name="Nature">
        <title>Exome sequencing identifies frequent mutation of the SWI/SNF complex gene PBRM1 in renal carcinoma.</title>
        <authorList>
            <person name="Varela I."/>
            <person name="Tarpey P."/>
            <person name="Raine K."/>
            <person name="Huang D."/>
            <person name="Ong C.K."/>
            <person name="Stephens P."/>
            <person name="Davies H."/>
            <person name="Jones D."/>
            <person name="Lin M.L."/>
            <person name="Teague J."/>
            <person name="Bignell G."/>
            <person name="Butler A."/>
            <person name="Cho J."/>
            <person name="Dalgliesh G.L."/>
            <person name="Galappaththige D."/>
            <person name="Greenman C."/>
            <person name="Hardy C."/>
            <person name="Jia M."/>
            <person name="Latimer C."/>
            <person name="Lau K.W."/>
            <person name="Marshall J."/>
            <person name="McLaren S."/>
            <person name="Menzies A."/>
            <person name="Mudie L."/>
            <person name="Stebbings L."/>
            <person name="Largaespada D.A."/>
            <person name="Wessels L.F.A."/>
            <person name="Richard S."/>
            <person name="Kahnoski R.J."/>
            <person name="Anema J."/>
            <person name="Tuveson D.A."/>
            <person name="Perez-Mancera P.A."/>
            <person name="Mustonen V."/>
            <person name="Fischer A."/>
            <person name="Adams D.J."/>
            <person name="Rust A."/>
            <person name="Chan-On W."/>
            <person name="Subimerb C."/>
            <person name="Dykema K."/>
            <person name="Furge K."/>
            <person name="Campbell P.J."/>
            <person name="Teh B.T."/>
            <person name="Stratton M.R."/>
            <person name="Futreal P.A."/>
        </authorList>
    </citation>
    <scope>VARIANT LEU-908</scope>
</reference>
<reference key="18">
    <citation type="journal article" date="2015" name="Am. J. Hum. Genet.">
        <title>Joubert Syndrome in French Canadians and Identification of Mutations in CEP104.</title>
        <authorList>
            <consortium name="Care4Rare Canada Consortium"/>
            <person name="Srour M."/>
            <person name="Hamdan F.F."/>
            <person name="McKnight D."/>
            <person name="Davis E."/>
            <person name="Mandel H."/>
            <person name="Schwartzentruber J."/>
            <person name="Martin B."/>
            <person name="Patry L."/>
            <person name="Nassif C."/>
            <person name="Dionne-Laporte A."/>
            <person name="Ospina L.H."/>
            <person name="Lemyre E."/>
            <person name="Massicotte C."/>
            <person name="Laframboise R."/>
            <person name="Maranda B."/>
            <person name="Labuda D."/>
            <person name="Decarie J.C."/>
            <person name="Rypens F."/>
            <person name="Goldsher D."/>
            <person name="Fallet-Bianco C."/>
            <person name="Soucy J.F."/>
            <person name="Laberge A.M."/>
            <person name="Maftei C."/>
            <person name="Boycott K."/>
            <person name="Brais B."/>
            <person name="Boucher R.M."/>
            <person name="Rouleau G.A."/>
            <person name="Katsanis N."/>
            <person name="Majewski J."/>
            <person name="Elpeleg O."/>
            <person name="Kukolich M.K."/>
            <person name="Shalev S."/>
            <person name="Michaud J.L."/>
        </authorList>
    </citation>
    <scope>VARIANTS VAL-863 AND MET-1140</scope>
</reference>
<reference key="19">
    <citation type="journal article" date="2020" name="Arterioscler. Thromb. Vasc. Biol.">
        <title>A novel recurrent COL5A1 genetic variant is associated with a dysplasia-associated arterial disease exhibiting dissections and fibromuscular dysplasia.</title>
        <authorList>
            <person name="Richer J."/>
            <person name="Hill H.L."/>
            <person name="Wang Y."/>
            <person name="Yang M.L."/>
            <person name="Hunker K.L."/>
            <person name="Lane J."/>
            <person name="Blackburn S."/>
            <person name="Coleman D.M."/>
            <person name="Eliason J."/>
            <person name="Sillon G."/>
            <person name="D'Agostino M.D."/>
            <person name="Jetty P."/>
            <person name="Mongeon F.P."/>
            <person name="Laberge A.M."/>
            <person name="Ryan S.E."/>
            <person name="Fendrikova-Mahlay N."/>
            <person name="Coutinho T."/>
            <person name="Mathis M.R."/>
            <person name="Zawistowski M."/>
            <person name="Hazen S.L."/>
            <person name="Katz A.E."/>
            <person name="Gornik H.L."/>
            <person name="Brummett C.M."/>
            <person name="Abecasis G."/>
            <person name="Bergin I.L."/>
            <person name="Stanley J.C."/>
            <person name="Li J.Z."/>
            <person name="Ganesh S.K."/>
        </authorList>
    </citation>
    <scope>VARIANT ASP-114</scope>
    <scope>VARIANTS FMDMF GLU-123; SER-514; TRP-611; LEU-1164 AND SER-1400</scope>
    <scope>INVOLVEMENT IN FMDMF</scope>
</reference>
<organism>
    <name type="scientific">Homo sapiens</name>
    <name type="common">Human</name>
    <dbReference type="NCBI Taxonomy" id="9606"/>
    <lineage>
        <taxon>Eukaryota</taxon>
        <taxon>Metazoa</taxon>
        <taxon>Chordata</taxon>
        <taxon>Craniata</taxon>
        <taxon>Vertebrata</taxon>
        <taxon>Euteleostomi</taxon>
        <taxon>Mammalia</taxon>
        <taxon>Eutheria</taxon>
        <taxon>Euarchontoglires</taxon>
        <taxon>Primates</taxon>
        <taxon>Haplorrhini</taxon>
        <taxon>Catarrhini</taxon>
        <taxon>Hominidae</taxon>
        <taxon>Homo</taxon>
    </lineage>
</organism>
<sequence>MDVHTRWKARSALRPGAPLLPPLLLLLLWAPPPSRAAQPADLLKVLDFHNLPDGITKTTGFCATRRSSKGPDVAYRVTKDAQLSAPTKQLYPASAFPEDFSILTTVKAKKGSQAFLVSIYNEQGIQQIGLELGRSPVFLYEDHTGKPGPEDYPLFRGINLSDGKWHRIALSVHKKNVTLILDCKKKTTKFLDRSDHPMIDINGIIVFGTRILDEEVFEGDIQQLLFVSDHRAAYDYCEHYSPDCDTAVPDTPQSQDPNPDEYYTEGDGEGETYYYEYPYYEDPEDLGKEPTPSKKPVEAAKETTEVPEELTPTPTEAAPMPETSEGAGKEEDVGIGDYDYVPSEDYYTPSPYDDLTYGEGEENPDQPTDPGAGAEIPTSTADTSNSSNPAPPPGEGADDLEGEFTEETIRNLDENYYDPYYDPTSSPSEIGPGMPANQDTIYEGIGGPRGEKGQKGEPAIIEPGMLIEGPPGPEGPAGLPGPPGTMGPTGQVGDPGERGPPGRPGLPGADGLPGPPGTMLMLPFRFGGGGDAGSKGPMVSAQESQAQAILQQARLALRGPAGPMGLTGRPGPVGPPGSGGLKGEPGDVGPQGPRGVQGPPGPAGKPGRRGRAGSDGARGMPGQTGPKGDRGFDGLAGLPGEKGHRGDPGPSGPPGPPGDDGERGDDGEVGPRGLPGEPGPRGLLGPKGPPGPPGPPGVTGMDGQPGPKGNVGPQGEPGPPGQQGNPGAQGLPGPQGAIGPPGEKGPLGKPGLPGMPGADGPPGHPGKEGPPGEKGGQGPPGPQGPIGYPGPRGVKGADGIRGLKGTKGEKGEDGFPGFKGDMGIKGDRGEIGPPGPRGEDGPEGPKGRGGPNGDPGPLGPPGEKGKLGVPGLPGYPGRQGPKGSIGFPGFPGANGEKGGRGTPGKPGPRGQRGPTGPRGERGPRGITGKPGPKGNSGGDGPAGPPGERGPNGPQGPTGFPGPKGPPGPPGKDGLPGHPGQRGETGFQGKTGPPGPPGVVGPQGPTGETGPMGERGHPGPPGPPGEQGLPGLAGKEGTKGDPGPAGLPGKDGPPGLRGFPGDRGLPGPVGALGLKGNEGPPGPPGPAGSPGERGPAGAAGPIGIPGRPGPQGPPGPAGEKGAPGEKGPQGPAGRDGLQGPVGLPGPAGPVGPPGEDGDKGEIGEPGQKGSKGDKGEQGPPGPTGPQGPIGQPGPSGADGEPGPRGQQGLFGQKGDEGPRGFPGPPGPVGLQGLPGPPGEKGETGDVGQMGPPGPPGPRGPSGAPGADGPQGPPGGIGNPGAVGEKGEPGEAGEPGLPGEGGPPGPKGERGEKGESGPSGAAGPPGPKGPPGDDGPKGSPGPVGFPGDPGPPGEPGPAGQDGPPGDKGDDGEPGQTGSPGPTGEPGPSGPPGKRGPPGPAGPEGRQGEKGAKGEAGLEGPPGKTGPIGPQGAPGKPGPDGLRGIPGPVGEQGLPGSPGPDGPPGPMGPPGLPGLKGDSGPKGEKGHPGLIGLIGPPGEQGEKGDRGLPGPQGSSGPKGEQGITGPSGPIGPPGPPGLPGPPGPKGAKGSSGPTGPKGEAGHPGPPGPPGPPGEVIQPLPIQASRTRRNIDASQLLDDGNGENYVDYADGMEEIFGSLNSLKLEIEQMKRPLGTQQNPARTCKDLQLCHPDFPDGEYWVDPNQGCSRDSFKVYCNFTAGGSTCVFPDKKSEGARITSWPKENPGSWFSEFKRGKLLSYVDAEGNPVGVVQMTFLRLLSASAHQNVTYHCYQSVAWQDAATGSYDKALRFLGSNDEEMSYDNNPYIRALVDGCATKKGYQKTVLEIDTPKVEQVPIVDIMFNDFGEASQKFGFEVGPACFMG</sequence>
<protein>
    <recommendedName>
        <fullName>Collagen alpha-1(V) chain</fullName>
    </recommendedName>
</protein>
<name>CO5A1_HUMAN</name>
<dbReference type="EMBL" id="D90279">
    <property type="protein sequence ID" value="BAA14323.1"/>
    <property type="molecule type" value="mRNA"/>
</dbReference>
<dbReference type="EMBL" id="M76729">
    <property type="protein sequence ID" value="AAA59993.1"/>
    <property type="molecule type" value="mRNA"/>
</dbReference>
<dbReference type="EMBL" id="AL591890">
    <property type="status" value="NOT_ANNOTATED_CDS"/>
    <property type="molecule type" value="Genomic_DNA"/>
</dbReference>
<dbReference type="EMBL" id="AL645768">
    <property type="status" value="NOT_ANNOTATED_CDS"/>
    <property type="molecule type" value="Genomic_DNA"/>
</dbReference>
<dbReference type="EMBL" id="AL603650">
    <property type="status" value="NOT_ANNOTATED_CDS"/>
    <property type="molecule type" value="Genomic_DNA"/>
</dbReference>
<dbReference type="CCDS" id="CCDS6982.1">
    <molecule id="P20908-1"/>
</dbReference>
<dbReference type="CCDS" id="CCDS75932.1">
    <molecule id="P20908-2"/>
</dbReference>
<dbReference type="PIR" id="S18802">
    <property type="entry name" value="CGHU1V"/>
</dbReference>
<dbReference type="RefSeq" id="NP_000084.3">
    <molecule id="P20908-1"/>
    <property type="nucleotide sequence ID" value="NM_000093.4"/>
</dbReference>
<dbReference type="RefSeq" id="NP_001265003.1">
    <molecule id="P20908-2"/>
    <property type="nucleotide sequence ID" value="NM_001278074.1"/>
</dbReference>
<dbReference type="PDB" id="7Y37">
    <property type="method" value="X-ray"/>
    <property type="resolution" value="1.45 A"/>
    <property type="chains" value="A/B/C=1052-1087"/>
</dbReference>
<dbReference type="PDBsum" id="7Y37"/>
<dbReference type="SMR" id="P20908"/>
<dbReference type="BioGRID" id="107686">
    <property type="interactions" value="53"/>
</dbReference>
<dbReference type="ComplexPortal" id="CPX-1727">
    <property type="entry name" value="Collagen type V trimer variant 1"/>
</dbReference>
<dbReference type="ComplexPortal" id="CPX-1728">
    <property type="entry name" value="Collagen type V trimer variant 2"/>
</dbReference>
<dbReference type="ComplexPortal" id="CPX-1729">
    <property type="entry name" value="Collagen type V trimer variant 3"/>
</dbReference>
<dbReference type="ComplexPortal" id="CPX-1752">
    <property type="entry name" value="Collagen type XI trimer variant 3"/>
</dbReference>
<dbReference type="FunCoup" id="P20908">
    <property type="interactions" value="205"/>
</dbReference>
<dbReference type="IntAct" id="P20908">
    <property type="interactions" value="39"/>
</dbReference>
<dbReference type="STRING" id="9606.ENSP00000360882"/>
<dbReference type="ChEMBL" id="CHEMBL2364188"/>
<dbReference type="GlyConnect" id="1128">
    <property type="glycosylation" value="10 N-Linked glycans (3 sites)"/>
</dbReference>
<dbReference type="GlyCosmos" id="P20908">
    <property type="glycosylation" value="9 sites, 12 glycans"/>
</dbReference>
<dbReference type="GlyGen" id="P20908">
    <property type="glycosylation" value="16 sites, 18 N-linked glycans (4 sites), 4 O-linked glycans (8 sites)"/>
</dbReference>
<dbReference type="iPTMnet" id="P20908"/>
<dbReference type="PhosphoSitePlus" id="P20908"/>
<dbReference type="BioMuta" id="COL5A1"/>
<dbReference type="DMDM" id="85687376"/>
<dbReference type="jPOST" id="P20908"/>
<dbReference type="MassIVE" id="P20908"/>
<dbReference type="PaxDb" id="9606-ENSP00000360882"/>
<dbReference type="PeptideAtlas" id="P20908"/>
<dbReference type="ProteomicsDB" id="53822"/>
<dbReference type="Pumba" id="P20908"/>
<dbReference type="Antibodypedia" id="3446">
    <property type="antibodies" value="450 antibodies from 37 providers"/>
</dbReference>
<dbReference type="DNASU" id="1289"/>
<dbReference type="Ensembl" id="ENST00000371817.8">
    <molecule id="P20908-1"/>
    <property type="protein sequence ID" value="ENSP00000360882.3"/>
    <property type="gene ID" value="ENSG00000130635.17"/>
</dbReference>
<dbReference type="Ensembl" id="ENST00000371820.4">
    <molecule id="P20908-2"/>
    <property type="protein sequence ID" value="ENSP00000360885.4"/>
    <property type="gene ID" value="ENSG00000130635.17"/>
</dbReference>
<dbReference type="GeneID" id="1289"/>
<dbReference type="KEGG" id="hsa:1289"/>
<dbReference type="MANE-Select" id="ENST00000371817.8">
    <property type="protein sequence ID" value="ENSP00000360882.3"/>
    <property type="RefSeq nucleotide sequence ID" value="NM_000093.5"/>
    <property type="RefSeq protein sequence ID" value="NP_000084.3"/>
</dbReference>
<dbReference type="UCSC" id="uc004cfe.5">
    <molecule id="P20908-1"/>
    <property type="organism name" value="human"/>
</dbReference>
<dbReference type="UCSC" id="uc031tfl.2">
    <property type="organism name" value="human"/>
</dbReference>
<dbReference type="AGR" id="HGNC:2209"/>
<dbReference type="CTD" id="1289"/>
<dbReference type="DisGeNET" id="1289"/>
<dbReference type="GeneCards" id="COL5A1"/>
<dbReference type="GeneReviews" id="COL5A1"/>
<dbReference type="HGNC" id="HGNC:2209">
    <property type="gene designation" value="COL5A1"/>
</dbReference>
<dbReference type="HPA" id="ENSG00000130635">
    <property type="expression patterns" value="Tissue enhanced (cervix)"/>
</dbReference>
<dbReference type="MalaCards" id="COL5A1"/>
<dbReference type="MIM" id="120215">
    <property type="type" value="gene"/>
</dbReference>
<dbReference type="MIM" id="130000">
    <property type="type" value="phenotype"/>
</dbReference>
<dbReference type="MIM" id="619329">
    <property type="type" value="phenotype"/>
</dbReference>
<dbReference type="neXtProt" id="NX_P20908"/>
<dbReference type="OpenTargets" id="ENSG00000130635"/>
<dbReference type="Orphanet" id="287">
    <property type="disease" value="Classical Ehlers-Danlos syndrome"/>
</dbReference>
<dbReference type="PharmGKB" id="PA26724"/>
<dbReference type="VEuPathDB" id="HostDB:ENSG00000130635"/>
<dbReference type="eggNOG" id="KOG3544">
    <property type="taxonomic scope" value="Eukaryota"/>
</dbReference>
<dbReference type="GeneTree" id="ENSGT00940000159211"/>
<dbReference type="HOGENOM" id="CLU_001074_2_1_1"/>
<dbReference type="InParanoid" id="P20908"/>
<dbReference type="OMA" id="PGHEGMQ"/>
<dbReference type="OrthoDB" id="8939548at2759"/>
<dbReference type="PAN-GO" id="P20908">
    <property type="GO annotations" value="7 GO annotations based on evolutionary models"/>
</dbReference>
<dbReference type="PhylomeDB" id="P20908"/>
<dbReference type="TreeFam" id="TF323987"/>
<dbReference type="PathwayCommons" id="P20908"/>
<dbReference type="Reactome" id="R-HSA-1442490">
    <property type="pathway name" value="Collagen degradation"/>
</dbReference>
<dbReference type="Reactome" id="R-HSA-1474244">
    <property type="pathway name" value="Extracellular matrix organization"/>
</dbReference>
<dbReference type="Reactome" id="R-HSA-1650814">
    <property type="pathway name" value="Collagen biosynthesis and modifying enzymes"/>
</dbReference>
<dbReference type="Reactome" id="R-HSA-186797">
    <property type="pathway name" value="Signaling by PDGF"/>
</dbReference>
<dbReference type="Reactome" id="R-HSA-2022090">
    <property type="pathway name" value="Assembly of collagen fibrils and other multimeric structures"/>
</dbReference>
<dbReference type="Reactome" id="R-HSA-216083">
    <property type="pathway name" value="Integrin cell surface interactions"/>
</dbReference>
<dbReference type="Reactome" id="R-HSA-3000170">
    <property type="pathway name" value="Syndecan interactions"/>
</dbReference>
<dbReference type="Reactome" id="R-HSA-3000171">
    <property type="pathway name" value="Non-integrin membrane-ECM interactions"/>
</dbReference>
<dbReference type="Reactome" id="R-HSA-3000178">
    <property type="pathway name" value="ECM proteoglycans"/>
</dbReference>
<dbReference type="Reactome" id="R-HSA-419037">
    <property type="pathway name" value="NCAM1 interactions"/>
</dbReference>
<dbReference type="Reactome" id="R-HSA-8874081">
    <property type="pathway name" value="MET activates PTK2 signaling"/>
</dbReference>
<dbReference type="Reactome" id="R-HSA-8948216">
    <property type="pathway name" value="Collagen chain trimerization"/>
</dbReference>
<dbReference type="SignaLink" id="P20908"/>
<dbReference type="SIGNOR" id="P20908"/>
<dbReference type="BioGRID-ORCS" id="1289">
    <property type="hits" value="33 hits in 1150 CRISPR screens"/>
</dbReference>
<dbReference type="ChiTaRS" id="COL5A1">
    <property type="organism name" value="human"/>
</dbReference>
<dbReference type="GeneWiki" id="Collagen,_type_V,_alpha_1"/>
<dbReference type="GenomeRNAi" id="1289"/>
<dbReference type="Pharos" id="P20908">
    <property type="development level" value="Tbio"/>
</dbReference>
<dbReference type="PRO" id="PR:P20908"/>
<dbReference type="Proteomes" id="UP000005640">
    <property type="component" value="Chromosome 9"/>
</dbReference>
<dbReference type="RNAct" id="P20908">
    <property type="molecule type" value="protein"/>
</dbReference>
<dbReference type="Bgee" id="ENSG00000130635">
    <property type="expression patterns" value="Expressed in stromal cell of endometrium and 177 other cell types or tissues"/>
</dbReference>
<dbReference type="ExpressionAtlas" id="P20908">
    <property type="expression patterns" value="baseline and differential"/>
</dbReference>
<dbReference type="GO" id="GO:0005604">
    <property type="term" value="C:basement membrane"/>
    <property type="evidence" value="ECO:0007669"/>
    <property type="project" value="Ensembl"/>
</dbReference>
<dbReference type="GO" id="GO:0005588">
    <property type="term" value="C:collagen type V trimer"/>
    <property type="evidence" value="ECO:0000315"/>
    <property type="project" value="UniProtKB"/>
</dbReference>
<dbReference type="GO" id="GO:0005592">
    <property type="term" value="C:collagen type XI trimer"/>
    <property type="evidence" value="ECO:0000304"/>
    <property type="project" value="GO_Central"/>
</dbReference>
<dbReference type="GO" id="GO:0062023">
    <property type="term" value="C:collagen-containing extracellular matrix"/>
    <property type="evidence" value="ECO:0000315"/>
    <property type="project" value="UniProtKB"/>
</dbReference>
<dbReference type="GO" id="GO:0005788">
    <property type="term" value="C:endoplasmic reticulum lumen"/>
    <property type="evidence" value="ECO:0000304"/>
    <property type="project" value="Reactome"/>
</dbReference>
<dbReference type="GO" id="GO:0005576">
    <property type="term" value="C:extracellular region"/>
    <property type="evidence" value="ECO:0007005"/>
    <property type="project" value="BHF-UCL"/>
</dbReference>
<dbReference type="GO" id="GO:0005615">
    <property type="term" value="C:extracellular space"/>
    <property type="evidence" value="ECO:0000318"/>
    <property type="project" value="GO_Central"/>
</dbReference>
<dbReference type="GO" id="GO:0030020">
    <property type="term" value="F:extracellular matrix structural constituent conferring tensile strength"/>
    <property type="evidence" value="ECO:0007005"/>
    <property type="project" value="BHF-UCL"/>
</dbReference>
<dbReference type="GO" id="GO:0008201">
    <property type="term" value="F:heparin binding"/>
    <property type="evidence" value="ECO:0000314"/>
    <property type="project" value="UniProtKB"/>
</dbReference>
<dbReference type="GO" id="GO:0005178">
    <property type="term" value="F:integrin binding"/>
    <property type="evidence" value="ECO:0000303"/>
    <property type="project" value="UniProtKB"/>
</dbReference>
<dbReference type="GO" id="GO:0046872">
    <property type="term" value="F:metal ion binding"/>
    <property type="evidence" value="ECO:0007669"/>
    <property type="project" value="UniProtKB-KW"/>
</dbReference>
<dbReference type="GO" id="GO:0048407">
    <property type="term" value="F:platelet-derived growth factor binding"/>
    <property type="evidence" value="ECO:0000314"/>
    <property type="project" value="MGI"/>
</dbReference>
<dbReference type="GO" id="GO:0043394">
    <property type="term" value="F:proteoglycan binding"/>
    <property type="evidence" value="ECO:0000353"/>
    <property type="project" value="UniProtKB"/>
</dbReference>
<dbReference type="GO" id="GO:0001568">
    <property type="term" value="P:blood vessel development"/>
    <property type="evidence" value="ECO:0007669"/>
    <property type="project" value="Ensembl"/>
</dbReference>
<dbReference type="GO" id="GO:0007155">
    <property type="term" value="P:cell adhesion"/>
    <property type="evidence" value="ECO:0000315"/>
    <property type="project" value="UniProtKB"/>
</dbReference>
<dbReference type="GO" id="GO:0016477">
    <property type="term" value="P:cell migration"/>
    <property type="evidence" value="ECO:0000315"/>
    <property type="project" value="UniProtKB"/>
</dbReference>
<dbReference type="GO" id="GO:0032964">
    <property type="term" value="P:collagen biosynthetic process"/>
    <property type="evidence" value="ECO:0000315"/>
    <property type="project" value="UniProtKB"/>
</dbReference>
<dbReference type="GO" id="GO:0030199">
    <property type="term" value="P:collagen fibril organization"/>
    <property type="evidence" value="ECO:0000315"/>
    <property type="project" value="UniProtKB"/>
</dbReference>
<dbReference type="GO" id="GO:0048592">
    <property type="term" value="P:eye morphogenesis"/>
    <property type="evidence" value="ECO:0000315"/>
    <property type="project" value="UniProtKB"/>
</dbReference>
<dbReference type="GO" id="GO:0003007">
    <property type="term" value="P:heart morphogenesis"/>
    <property type="evidence" value="ECO:0007669"/>
    <property type="project" value="Ensembl"/>
</dbReference>
<dbReference type="GO" id="GO:0045112">
    <property type="term" value="P:integrin biosynthetic process"/>
    <property type="evidence" value="ECO:0000315"/>
    <property type="project" value="UniProtKB"/>
</dbReference>
<dbReference type="GO" id="GO:1903225">
    <property type="term" value="P:negative regulation of endodermal cell differentiation"/>
    <property type="evidence" value="ECO:0000314"/>
    <property type="project" value="UniProtKB"/>
</dbReference>
<dbReference type="GO" id="GO:0051128">
    <property type="term" value="P:regulation of cellular component organization"/>
    <property type="evidence" value="ECO:0007669"/>
    <property type="project" value="Ensembl"/>
</dbReference>
<dbReference type="GO" id="GO:0043588">
    <property type="term" value="P:skin development"/>
    <property type="evidence" value="ECO:0000315"/>
    <property type="project" value="UniProtKB"/>
</dbReference>
<dbReference type="GO" id="GO:0097435">
    <property type="term" value="P:supramolecular fiber organization"/>
    <property type="evidence" value="ECO:0000315"/>
    <property type="project" value="UniProtKB"/>
</dbReference>
<dbReference type="GO" id="GO:0035989">
    <property type="term" value="P:tendon development"/>
    <property type="evidence" value="ECO:0007669"/>
    <property type="project" value="Ensembl"/>
</dbReference>
<dbReference type="GO" id="GO:0035313">
    <property type="term" value="P:wound healing, spreading of epidermal cells"/>
    <property type="evidence" value="ECO:0000315"/>
    <property type="project" value="UniProtKB"/>
</dbReference>
<dbReference type="FunFam" id="2.60.120.1000:FF:000002">
    <property type="entry name" value="Collagen XI alpha 1 chain"/>
    <property type="match status" value="1"/>
</dbReference>
<dbReference type="FunFam" id="2.60.120.200:FF:000016">
    <property type="entry name" value="Collagen XI alpha 1 chain"/>
    <property type="match status" value="1"/>
</dbReference>
<dbReference type="Gene3D" id="2.60.120.1000">
    <property type="match status" value="1"/>
</dbReference>
<dbReference type="Gene3D" id="2.60.120.200">
    <property type="match status" value="1"/>
</dbReference>
<dbReference type="InterPro" id="IPR008160">
    <property type="entry name" value="Collagen"/>
</dbReference>
<dbReference type="InterPro" id="IPR050149">
    <property type="entry name" value="Collagen_superfamily"/>
</dbReference>
<dbReference type="InterPro" id="IPR013320">
    <property type="entry name" value="ConA-like_dom_sf"/>
</dbReference>
<dbReference type="InterPro" id="IPR000885">
    <property type="entry name" value="Fib_collagen_C"/>
</dbReference>
<dbReference type="InterPro" id="IPR001791">
    <property type="entry name" value="Laminin_G"/>
</dbReference>
<dbReference type="InterPro" id="IPR048287">
    <property type="entry name" value="TSPN-like_N"/>
</dbReference>
<dbReference type="PANTHER" id="PTHR24023">
    <property type="entry name" value="COLLAGEN ALPHA"/>
    <property type="match status" value="1"/>
</dbReference>
<dbReference type="PANTHER" id="PTHR24023:SF1082">
    <property type="entry name" value="COLLAGEN TRIPLE HELIX REPEAT"/>
    <property type="match status" value="1"/>
</dbReference>
<dbReference type="Pfam" id="PF01410">
    <property type="entry name" value="COLFI"/>
    <property type="match status" value="1"/>
</dbReference>
<dbReference type="Pfam" id="PF01391">
    <property type="entry name" value="Collagen"/>
    <property type="match status" value="4"/>
</dbReference>
<dbReference type="Pfam" id="PF02210">
    <property type="entry name" value="Laminin_G_2"/>
    <property type="match status" value="1"/>
</dbReference>
<dbReference type="SMART" id="SM00038">
    <property type="entry name" value="COLFI"/>
    <property type="match status" value="1"/>
</dbReference>
<dbReference type="SMART" id="SM00282">
    <property type="entry name" value="LamG"/>
    <property type="match status" value="1"/>
</dbReference>
<dbReference type="SMART" id="SM00210">
    <property type="entry name" value="TSPN"/>
    <property type="match status" value="1"/>
</dbReference>
<dbReference type="SUPFAM" id="SSF49899">
    <property type="entry name" value="Concanavalin A-like lectins/glucanases"/>
    <property type="match status" value="1"/>
</dbReference>
<dbReference type="PROSITE" id="PS51461">
    <property type="entry name" value="NC1_FIB"/>
    <property type="match status" value="1"/>
</dbReference>